<sequence>MPQRKLGKTGAHRKAMFRNMLTDFFRHGRIETTLPKAKELRSLAEKMITTAKTNDLSSRRKVLKYVKDKEVVKKLFDEIAPRYSERPGGYTRILKMYPRRGDAAEKAIIELVEE</sequence>
<accession>B8D0T8</accession>
<keyword id="KW-1185">Reference proteome</keyword>
<keyword id="KW-0687">Ribonucleoprotein</keyword>
<keyword id="KW-0689">Ribosomal protein</keyword>
<gene>
    <name evidence="1" type="primary">rplQ</name>
    <name type="ordered locus">Hore_01460</name>
</gene>
<proteinExistence type="inferred from homology"/>
<name>RL17_HALOH</name>
<comment type="subunit">
    <text evidence="1">Part of the 50S ribosomal subunit. Contacts protein L32.</text>
</comment>
<comment type="similarity">
    <text evidence="1">Belongs to the bacterial ribosomal protein bL17 family.</text>
</comment>
<organism>
    <name type="scientific">Halothermothrix orenii (strain H 168 / OCM 544 / DSM 9562)</name>
    <dbReference type="NCBI Taxonomy" id="373903"/>
    <lineage>
        <taxon>Bacteria</taxon>
        <taxon>Bacillati</taxon>
        <taxon>Bacillota</taxon>
        <taxon>Clostridia</taxon>
        <taxon>Halanaerobiales</taxon>
        <taxon>Halothermotrichaceae</taxon>
        <taxon>Halothermothrix</taxon>
    </lineage>
</organism>
<reference key="1">
    <citation type="journal article" date="2009" name="PLoS ONE">
        <title>Genome analysis of the anaerobic thermohalophilic bacterium Halothermothrix orenii.</title>
        <authorList>
            <person name="Mavromatis K."/>
            <person name="Ivanova N."/>
            <person name="Anderson I."/>
            <person name="Lykidis A."/>
            <person name="Hooper S.D."/>
            <person name="Sun H."/>
            <person name="Kunin V."/>
            <person name="Lapidus A."/>
            <person name="Hugenholtz P."/>
            <person name="Patel B."/>
            <person name="Kyrpides N.C."/>
        </authorList>
    </citation>
    <scope>NUCLEOTIDE SEQUENCE [LARGE SCALE GENOMIC DNA]</scope>
    <source>
        <strain>H 168 / OCM 544 / DSM 9562</strain>
    </source>
</reference>
<feature type="chain" id="PRO_1000184026" description="Large ribosomal subunit protein bL17">
    <location>
        <begin position="1"/>
        <end position="114"/>
    </location>
</feature>
<evidence type="ECO:0000255" key="1">
    <source>
        <dbReference type="HAMAP-Rule" id="MF_01368"/>
    </source>
</evidence>
<evidence type="ECO:0000305" key="2"/>
<dbReference type="EMBL" id="CP001098">
    <property type="protein sequence ID" value="ACL68907.1"/>
    <property type="molecule type" value="Genomic_DNA"/>
</dbReference>
<dbReference type="RefSeq" id="WP_012635105.1">
    <property type="nucleotide sequence ID" value="NC_011899.1"/>
</dbReference>
<dbReference type="SMR" id="B8D0T8"/>
<dbReference type="STRING" id="373903.Hore_01460"/>
<dbReference type="KEGG" id="hor:Hore_01460"/>
<dbReference type="eggNOG" id="COG0203">
    <property type="taxonomic scope" value="Bacteria"/>
</dbReference>
<dbReference type="HOGENOM" id="CLU_074407_2_2_9"/>
<dbReference type="OrthoDB" id="9809073at2"/>
<dbReference type="Proteomes" id="UP000000719">
    <property type="component" value="Chromosome"/>
</dbReference>
<dbReference type="GO" id="GO:0022625">
    <property type="term" value="C:cytosolic large ribosomal subunit"/>
    <property type="evidence" value="ECO:0007669"/>
    <property type="project" value="TreeGrafter"/>
</dbReference>
<dbReference type="GO" id="GO:0003735">
    <property type="term" value="F:structural constituent of ribosome"/>
    <property type="evidence" value="ECO:0007669"/>
    <property type="project" value="InterPro"/>
</dbReference>
<dbReference type="GO" id="GO:0006412">
    <property type="term" value="P:translation"/>
    <property type="evidence" value="ECO:0007669"/>
    <property type="project" value="UniProtKB-UniRule"/>
</dbReference>
<dbReference type="FunFam" id="3.90.1030.10:FF:000001">
    <property type="entry name" value="50S ribosomal protein L17"/>
    <property type="match status" value="1"/>
</dbReference>
<dbReference type="Gene3D" id="3.90.1030.10">
    <property type="entry name" value="Ribosomal protein L17"/>
    <property type="match status" value="1"/>
</dbReference>
<dbReference type="HAMAP" id="MF_01368">
    <property type="entry name" value="Ribosomal_bL17"/>
    <property type="match status" value="1"/>
</dbReference>
<dbReference type="InterPro" id="IPR000456">
    <property type="entry name" value="Ribosomal_bL17"/>
</dbReference>
<dbReference type="InterPro" id="IPR047859">
    <property type="entry name" value="Ribosomal_bL17_CS"/>
</dbReference>
<dbReference type="InterPro" id="IPR036373">
    <property type="entry name" value="Ribosomal_bL17_sf"/>
</dbReference>
<dbReference type="NCBIfam" id="TIGR00059">
    <property type="entry name" value="L17"/>
    <property type="match status" value="1"/>
</dbReference>
<dbReference type="PANTHER" id="PTHR14413:SF16">
    <property type="entry name" value="LARGE RIBOSOMAL SUBUNIT PROTEIN BL17M"/>
    <property type="match status" value="1"/>
</dbReference>
<dbReference type="PANTHER" id="PTHR14413">
    <property type="entry name" value="RIBOSOMAL PROTEIN L17"/>
    <property type="match status" value="1"/>
</dbReference>
<dbReference type="Pfam" id="PF01196">
    <property type="entry name" value="Ribosomal_L17"/>
    <property type="match status" value="1"/>
</dbReference>
<dbReference type="SUPFAM" id="SSF64263">
    <property type="entry name" value="Prokaryotic ribosomal protein L17"/>
    <property type="match status" value="1"/>
</dbReference>
<dbReference type="PROSITE" id="PS01167">
    <property type="entry name" value="RIBOSOMAL_L17"/>
    <property type="match status" value="1"/>
</dbReference>
<protein>
    <recommendedName>
        <fullName evidence="1">Large ribosomal subunit protein bL17</fullName>
    </recommendedName>
    <alternativeName>
        <fullName evidence="2">50S ribosomal protein L17</fullName>
    </alternativeName>
</protein>